<name>OTC_RAT</name>
<comment type="function">
    <text evidence="3">Catalyzes the second step of the urea cycle, the condensation of carbamoyl phosphate with L-ornithine to form L-citrulline (PubMed:2290837). The urea cycle ensures the detoxification of ammonia by converting it to urea for excretion (PubMed:2290837).</text>
</comment>
<comment type="catalytic activity">
    <reaction evidence="3">
        <text>carbamoyl phosphate + L-ornithine = L-citrulline + phosphate + H(+)</text>
        <dbReference type="Rhea" id="RHEA:19513"/>
        <dbReference type="ChEBI" id="CHEBI:15378"/>
        <dbReference type="ChEBI" id="CHEBI:43474"/>
        <dbReference type="ChEBI" id="CHEBI:46911"/>
        <dbReference type="ChEBI" id="CHEBI:57743"/>
        <dbReference type="ChEBI" id="CHEBI:58228"/>
        <dbReference type="EC" id="2.1.3.3"/>
    </reaction>
    <physiologicalReaction direction="right-to-left" evidence="7">
        <dbReference type="Rhea" id="RHEA:19515"/>
    </physiologicalReaction>
</comment>
<comment type="activity regulation">
    <text evidence="1">Negatively regulated by lysine acetylation.</text>
</comment>
<comment type="pathway">
    <text evidence="7">Nitrogen metabolism; urea cycle; L-citrulline from L-ornithine and carbamoyl phosphate: step 1/1.</text>
</comment>
<comment type="subunit">
    <text evidence="1">Homotrimer.</text>
</comment>
<comment type="subcellular location">
    <subcellularLocation>
        <location evidence="1">Mitochondrion matrix</location>
    </subcellularLocation>
</comment>
<comment type="PTM">
    <text evidence="1">Acetylation at Lys-88 negatively regulates ornithine carbamoyltransferase activity in response to nutrient signals.</text>
</comment>
<comment type="similarity">
    <text evidence="6">Belongs to the aspartate/ornithine carbamoyltransferase superfamily. OTCase family.</text>
</comment>
<keyword id="KW-0007">Acetylation</keyword>
<keyword id="KW-0028">Amino-acid biosynthesis</keyword>
<keyword id="KW-0055">Arginine biosynthesis</keyword>
<keyword id="KW-0903">Direct protein sequencing</keyword>
<keyword id="KW-0496">Mitochondrion</keyword>
<keyword id="KW-0597">Phosphoprotein</keyword>
<keyword id="KW-1185">Reference proteome</keyword>
<keyword id="KW-0808">Transferase</keyword>
<keyword id="KW-0809">Transit peptide</keyword>
<keyword id="KW-0835">Urea cycle</keyword>
<proteinExistence type="evidence at protein level"/>
<evidence type="ECO:0000250" key="1">
    <source>
        <dbReference type="UniProtKB" id="P00480"/>
    </source>
</evidence>
<evidence type="ECO:0000250" key="2">
    <source>
        <dbReference type="UniProtKB" id="P11725"/>
    </source>
</evidence>
<evidence type="ECO:0000269" key="3">
    <source>
    </source>
</evidence>
<evidence type="ECO:0000269" key="4">
    <source>
    </source>
</evidence>
<evidence type="ECO:0000303" key="5">
    <source>
    </source>
</evidence>
<evidence type="ECO:0000305" key="6"/>
<evidence type="ECO:0000305" key="7">
    <source>
    </source>
</evidence>
<evidence type="ECO:0000305" key="8">
    <source>
    </source>
</evidence>
<evidence type="ECO:0000312" key="9">
    <source>
        <dbReference type="RGD" id="3236"/>
    </source>
</evidence>
<gene>
    <name evidence="9" type="primary">Otc</name>
</gene>
<sequence length="354" mass="39886">MLSNLRILLNKAALRKAHTSMVRNFRYGKPVQSQVQLKGRDLLTLKNFTGEEIQYMLWLSADLKFRIKQKGEYLPLLQGKSLGMIFEKRSTRTRLSTETGFALLGGHPSFLTTQDIHLGVNESLTDTARVLSSMTDAVLARVYKQSDLDILAKEATIPIVNGLSDLYHPIQILADYLTLQEHYGSLKGLTLSWIGDGNNILHSIMMSAAKFGMHLQAATPKGYEPDPNIVKLAEQYAKENGTRLSMTNDPLEAARGGNVLITDTWISMGQEDEKKKRLQAFQGYQVTMKTAKVAASDWTFLHCLPRKPEEVDDEVFYSPRSLVFPEAENRKWTIMAVMVSLLTDYSPVLQKPKF</sequence>
<reference key="1">
    <citation type="journal article" date="1984" name="Proc. Natl. Acad. Sci. U.S.A.">
        <title>Molecular cloning and nucleotide sequence of cDNA for rat ornithine carbamoyltransferase precursor.</title>
        <authorList>
            <person name="Takiguchi M."/>
            <person name="Miura S."/>
            <person name="Mori M."/>
            <person name="Tatibana M."/>
            <person name="Nagata S."/>
            <person name="Kaziro Y."/>
        </authorList>
    </citation>
    <scope>NUCLEOTIDE SEQUENCE [MRNA]</scope>
</reference>
<reference key="2">
    <citation type="journal article" date="1987" name="Proc. Natl. Acad. Sci. U.S.A.">
        <title>Structure of the rat ornithine carbamoyltransferase gene, a large, X chromosome-linked gene with an atypical promoter.</title>
        <authorList>
            <person name="Takiguchi M."/>
            <person name="Murakami T."/>
            <person name="Miura S."/>
            <person name="Mori M."/>
        </authorList>
    </citation>
    <scope>NUCLEOTIDE SEQUENCE [GENOMIC DNA]</scope>
    <source>
        <strain>Wistar</strain>
        <tissue>Liver</tissue>
    </source>
</reference>
<reference key="3">
    <citation type="journal article" date="1985" name="Nucleic Acids Res.">
        <title>A cDNA clone for the precursor of rat mitochondrial ornithine transcarbamylase: comparison of rat and human leader sequences and conservation of catalytic sites.</title>
        <authorList>
            <person name="Kraus J.P."/>
            <person name="Hodges P.E."/>
            <person name="Williamson C.L."/>
            <person name="Horwich A.L."/>
            <person name="Kalousek F."/>
            <person name="Williams K.R."/>
            <person name="Rosenberg L.E."/>
        </authorList>
    </citation>
    <scope>NUCLEOTIDE SEQUENCE [MRNA]</scope>
</reference>
<reference key="4">
    <citation type="journal article" date="1985" name="DNA">
        <title>The primary structure of the imported mitochondrial protein, ornithine transcarbamylase from rat liver: mRNA levels during ontogeny.</title>
        <authorList>
            <person name="McIntyre P."/>
            <person name="Graf L."/>
            <person name="Mercer J.F.B."/>
            <person name="Wake S.A."/>
            <person name="Hudson P.J."/>
            <person name="Hoogenraad N."/>
        </authorList>
    </citation>
    <scope>NUCLEOTIDE SEQUENCE [MRNA]</scope>
</reference>
<reference key="5">
    <citation type="journal article" date="1984" name="FEBS Lett.">
        <title>A highly basic N-terminal extension of the mitochondrial matrix enzyme ornithine transcarbamylase from rat liver.</title>
        <authorList>
            <person name="McIntyre P."/>
            <person name="Graf L."/>
            <person name="Mercer J."/>
            <person name="Peterson G."/>
            <person name="Hudson P.J."/>
            <person name="Hoogenraad N."/>
        </authorList>
    </citation>
    <scope>NUCLEOTIDE SEQUENCE OF 1-102</scope>
</reference>
<reference key="6">
    <citation type="journal article" date="1988" name="Biochem. J.">
        <title>A cadmium-binding protein in rat liver identified as ornithine carbamoyltransferase.</title>
        <authorList>
            <person name="Aoki Y."/>
            <person name="Sunaga H."/>
            <person name="Suzuki K.T."/>
        </authorList>
    </citation>
    <scope>PROTEIN SEQUENCE OF 33-56; 293-302; 307-317 AND 321-329</scope>
    <scope>TRANSIT PEPTIDE</scope>
    <source>
        <tissue>Liver</tissue>
    </source>
</reference>
<reference key="7">
    <citation type="journal article" date="1990" name="Protein Eng.">
        <title>Site-directed mutagenesis of Arg60 and Cys271 in ornithine transcarbamylase from rat liver.</title>
        <authorList>
            <person name="McDowall S."/>
            <person name="van Heeswijck R."/>
            <person name="Hoogenraad N."/>
        </authorList>
    </citation>
    <scope>FUNCTION</scope>
    <scope>CATALYTIC ACTIVITY</scope>
    <scope>MUTAGENESIS OF ARG-92 AND CYS-303</scope>
</reference>
<protein>
    <recommendedName>
        <fullName evidence="8">Ornithine transcarbamylase, mitochondrial</fullName>
        <shortName evidence="5">OTCase</shortName>
        <ecNumber evidence="3">2.1.3.3</ecNumber>
    </recommendedName>
    <alternativeName>
        <fullName>Ornithine carbamoyltransferase, mitochondrial</fullName>
    </alternativeName>
</protein>
<feature type="transit peptide" description="Mitochondrion" evidence="4">
    <location>
        <begin position="1"/>
        <end position="32"/>
    </location>
</feature>
<feature type="chain" id="PRO_0000020339" description="Ornithine transcarbamylase, mitochondrial">
    <location>
        <begin position="33"/>
        <end position="354"/>
    </location>
</feature>
<feature type="active site" description="Proton acceptor" evidence="1">
    <location>
        <position position="303"/>
    </location>
</feature>
<feature type="binding site" evidence="1">
    <location>
        <begin position="90"/>
        <end position="93"/>
    </location>
    <ligand>
        <name>carbamoyl phosphate</name>
        <dbReference type="ChEBI" id="CHEBI:58228"/>
    </ligand>
</feature>
<feature type="binding site" evidence="1">
    <location>
        <position position="141"/>
    </location>
    <ligand>
        <name>carbamoyl phosphate</name>
        <dbReference type="ChEBI" id="CHEBI:58228"/>
    </ligand>
</feature>
<feature type="binding site" evidence="1">
    <location>
        <position position="168"/>
    </location>
    <ligand>
        <name>carbamoyl phosphate</name>
        <dbReference type="ChEBI" id="CHEBI:58228"/>
    </ligand>
</feature>
<feature type="binding site" evidence="1">
    <location>
        <position position="171"/>
    </location>
    <ligand>
        <name>carbamoyl phosphate</name>
        <dbReference type="ChEBI" id="CHEBI:58228"/>
    </ligand>
</feature>
<feature type="binding site" evidence="1">
    <location>
        <position position="199"/>
    </location>
    <ligand>
        <name>L-ornithine</name>
        <dbReference type="ChEBI" id="CHEBI:46911"/>
    </ligand>
</feature>
<feature type="binding site" evidence="1">
    <location>
        <position position="263"/>
    </location>
    <ligand>
        <name>L-ornithine</name>
        <dbReference type="ChEBI" id="CHEBI:46911"/>
    </ligand>
</feature>
<feature type="binding site" evidence="1">
    <location>
        <position position="267"/>
    </location>
    <ligand>
        <name>L-ornithine</name>
        <dbReference type="ChEBI" id="CHEBI:46911"/>
    </ligand>
</feature>
<feature type="binding site" evidence="1">
    <location>
        <position position="268"/>
    </location>
    <ligand>
        <name>L-ornithine</name>
        <dbReference type="ChEBI" id="CHEBI:46911"/>
    </ligand>
</feature>
<feature type="binding site" evidence="1">
    <location>
        <begin position="303"/>
        <end position="304"/>
    </location>
    <ligand>
        <name>carbamoyl phosphate</name>
        <dbReference type="ChEBI" id="CHEBI:58228"/>
    </ligand>
</feature>
<feature type="binding site" evidence="1">
    <location>
        <position position="330"/>
    </location>
    <ligand>
        <name>carbamoyl phosphate</name>
        <dbReference type="ChEBI" id="CHEBI:58228"/>
    </ligand>
</feature>
<feature type="modified residue" description="N6-acetyllysine; alternate" evidence="2">
    <location>
        <position position="70"/>
    </location>
</feature>
<feature type="modified residue" description="N6-succinyllysine; alternate" evidence="2">
    <location>
        <position position="70"/>
    </location>
</feature>
<feature type="modified residue" description="N6-succinyllysine" evidence="2">
    <location>
        <position position="80"/>
    </location>
</feature>
<feature type="modified residue" description="N6-acetyllysine; alternate" evidence="1">
    <location>
        <position position="88"/>
    </location>
</feature>
<feature type="modified residue" description="N6-succinyllysine; alternate" evidence="2">
    <location>
        <position position="88"/>
    </location>
</feature>
<feature type="modified residue" description="Phosphoserine" evidence="1">
    <location>
        <position position="133"/>
    </location>
</feature>
<feature type="modified residue" description="N6-acetyllysine; alternate" evidence="2">
    <location>
        <position position="144"/>
    </location>
</feature>
<feature type="modified residue" description="N6-succinyllysine; alternate" evidence="2">
    <location>
        <position position="144"/>
    </location>
</feature>
<feature type="modified residue" description="N6-acetyllysine; alternate" evidence="2">
    <location>
        <position position="221"/>
    </location>
</feature>
<feature type="modified residue" description="N6-succinyllysine; alternate" evidence="2">
    <location>
        <position position="221"/>
    </location>
</feature>
<feature type="modified residue" description="N6-acetyllysine; alternate" evidence="2">
    <location>
        <position position="231"/>
    </location>
</feature>
<feature type="modified residue" description="N6-succinyllysine; alternate" evidence="2">
    <location>
        <position position="231"/>
    </location>
</feature>
<feature type="modified residue" description="N6-acetyllysine; alternate" evidence="2">
    <location>
        <position position="238"/>
    </location>
</feature>
<feature type="modified residue" description="N6-succinyllysine; alternate" evidence="2">
    <location>
        <position position="238"/>
    </location>
</feature>
<feature type="modified residue" description="N6-succinyllysine" evidence="2">
    <location>
        <position position="274"/>
    </location>
</feature>
<feature type="modified residue" description="N6-succinyllysine" evidence="2">
    <location>
        <position position="289"/>
    </location>
</feature>
<feature type="modified residue" description="N6-acetyllysine; alternate" evidence="2">
    <location>
        <position position="292"/>
    </location>
</feature>
<feature type="modified residue" description="N6-succinyllysine; alternate" evidence="2">
    <location>
        <position position="292"/>
    </location>
</feature>
<feature type="modified residue" description="N6-acetyllysine; alternate" evidence="2">
    <location>
        <position position="307"/>
    </location>
</feature>
<feature type="modified residue" description="N6-succinyllysine; alternate" evidence="2">
    <location>
        <position position="307"/>
    </location>
</feature>
<feature type="mutagenesis site" description="Strong decrease in ornithine carbamoyltransferase activity." evidence="3">
    <original>R</original>
    <variation>L</variation>
    <location>
        <position position="92"/>
    </location>
</feature>
<feature type="mutagenesis site" description="Increases KM for ornithine 5-fold and decreases kcat 20-fold." evidence="3">
    <original>C</original>
    <variation>S</variation>
    <location>
        <position position="303"/>
    </location>
</feature>
<feature type="sequence conflict" description="In Ref. 3; AAA41772." evidence="6" ref="3">
    <original>G</original>
    <variation>P</variation>
    <location>
        <position position="39"/>
    </location>
</feature>
<feature type="sequence conflict" description="In Ref. 3; CAA26007/AAA41772." evidence="6" ref="3">
    <original>G</original>
    <variation>S</variation>
    <location>
        <position position="241"/>
    </location>
</feature>
<organism>
    <name type="scientific">Rattus norvegicus</name>
    <name type="common">Rat</name>
    <dbReference type="NCBI Taxonomy" id="10116"/>
    <lineage>
        <taxon>Eukaryota</taxon>
        <taxon>Metazoa</taxon>
        <taxon>Chordata</taxon>
        <taxon>Craniata</taxon>
        <taxon>Vertebrata</taxon>
        <taxon>Euteleostomi</taxon>
        <taxon>Mammalia</taxon>
        <taxon>Eutheria</taxon>
        <taxon>Euarchontoglires</taxon>
        <taxon>Glires</taxon>
        <taxon>Rodentia</taxon>
        <taxon>Myomorpha</taxon>
        <taxon>Muroidea</taxon>
        <taxon>Muridae</taxon>
        <taxon>Murinae</taxon>
        <taxon>Rattus</taxon>
    </lineage>
</organism>
<accession>P00481</accession>
<accession>Q63407</accession>
<dbReference type="EC" id="2.1.3.3" evidence="3"/>
<dbReference type="EMBL" id="K03040">
    <property type="protein sequence ID" value="AAA41768.1"/>
    <property type="molecule type" value="mRNA"/>
</dbReference>
<dbReference type="EMBL" id="M16933">
    <property type="protein sequence ID" value="AAA41769.1"/>
    <property type="molecule type" value="Genomic_DNA"/>
</dbReference>
<dbReference type="EMBL" id="M16924">
    <property type="protein sequence ID" value="AAA41769.1"/>
    <property type="status" value="JOINED"/>
    <property type="molecule type" value="Genomic_DNA"/>
</dbReference>
<dbReference type="EMBL" id="M16925">
    <property type="protein sequence ID" value="AAA41769.1"/>
    <property type="status" value="JOINED"/>
    <property type="molecule type" value="Genomic_DNA"/>
</dbReference>
<dbReference type="EMBL" id="M16926">
    <property type="protein sequence ID" value="AAA41769.1"/>
    <property type="status" value="JOINED"/>
    <property type="molecule type" value="Genomic_DNA"/>
</dbReference>
<dbReference type="EMBL" id="M16928">
    <property type="protein sequence ID" value="AAA41769.1"/>
    <property type="status" value="JOINED"/>
    <property type="molecule type" value="Genomic_DNA"/>
</dbReference>
<dbReference type="EMBL" id="M16929">
    <property type="protein sequence ID" value="AAA41769.1"/>
    <property type="status" value="JOINED"/>
    <property type="molecule type" value="Genomic_DNA"/>
</dbReference>
<dbReference type="EMBL" id="M16930">
    <property type="protein sequence ID" value="AAA41769.1"/>
    <property type="status" value="JOINED"/>
    <property type="molecule type" value="Genomic_DNA"/>
</dbReference>
<dbReference type="EMBL" id="M16932">
    <property type="protein sequence ID" value="AAA41769.1"/>
    <property type="status" value="JOINED"/>
    <property type="molecule type" value="Genomic_DNA"/>
</dbReference>
<dbReference type="EMBL" id="X01976">
    <property type="protein sequence ID" value="CAA26007.1"/>
    <property type="molecule type" value="mRNA"/>
</dbReference>
<dbReference type="EMBL" id="K00001">
    <property type="protein sequence ID" value="AAA41772.1"/>
    <property type="molecule type" value="mRNA"/>
</dbReference>
<dbReference type="EMBL" id="M11266">
    <property type="protein sequence ID" value="AAA41767.1"/>
    <property type="molecule type" value="mRNA"/>
</dbReference>
<dbReference type="EMBL" id="X01178">
    <property type="protein sequence ID" value="CAA25618.1"/>
    <property type="molecule type" value="mRNA"/>
</dbReference>
<dbReference type="PIR" id="A00563">
    <property type="entry name" value="OWRT"/>
</dbReference>
<dbReference type="RefSeq" id="NP_037210.1">
    <property type="nucleotide sequence ID" value="NM_013078.2"/>
</dbReference>
<dbReference type="SMR" id="P00481"/>
<dbReference type="FunCoup" id="P00481">
    <property type="interactions" value="315"/>
</dbReference>
<dbReference type="STRING" id="10116.ENSRNOP00000004686"/>
<dbReference type="iPTMnet" id="P00481"/>
<dbReference type="PhosphoSitePlus" id="P00481"/>
<dbReference type="PaxDb" id="10116-ENSRNOP00000004686"/>
<dbReference type="Ensembl" id="ENSRNOT00000004686.4">
    <property type="protein sequence ID" value="ENSRNOP00000004686.1"/>
    <property type="gene ID" value="ENSRNOG00000003370.8"/>
</dbReference>
<dbReference type="GeneID" id="25611"/>
<dbReference type="KEGG" id="rno:25611"/>
<dbReference type="UCSC" id="RGD:3236">
    <property type="organism name" value="rat"/>
</dbReference>
<dbReference type="AGR" id="RGD:3236"/>
<dbReference type="CTD" id="5009"/>
<dbReference type="RGD" id="3236">
    <property type="gene designation" value="Otc"/>
</dbReference>
<dbReference type="eggNOG" id="KOG1504">
    <property type="taxonomic scope" value="Eukaryota"/>
</dbReference>
<dbReference type="GeneTree" id="ENSGT00510000047417"/>
<dbReference type="HOGENOM" id="CLU_043846_3_0_1"/>
<dbReference type="InParanoid" id="P00481"/>
<dbReference type="OMA" id="DGNNVCN"/>
<dbReference type="OrthoDB" id="10252326at2759"/>
<dbReference type="PhylomeDB" id="P00481"/>
<dbReference type="TreeFam" id="TF352580"/>
<dbReference type="Reactome" id="R-RNO-1268020">
    <property type="pathway name" value="Mitochondrial protein import"/>
</dbReference>
<dbReference type="Reactome" id="R-RNO-70635">
    <property type="pathway name" value="Urea cycle"/>
</dbReference>
<dbReference type="SABIO-RK" id="P00481"/>
<dbReference type="UniPathway" id="UPA00158">
    <property type="reaction ID" value="UER00271"/>
</dbReference>
<dbReference type="PRO" id="PR:P00481"/>
<dbReference type="Proteomes" id="UP000002494">
    <property type="component" value="Chromosome X"/>
</dbReference>
<dbReference type="Bgee" id="ENSRNOG00000003370">
    <property type="expression patterns" value="Expressed in liver and 15 other cell types or tissues"/>
</dbReference>
<dbReference type="GO" id="GO:0005743">
    <property type="term" value="C:mitochondrial inner membrane"/>
    <property type="evidence" value="ECO:0000314"/>
    <property type="project" value="RGD"/>
</dbReference>
<dbReference type="GO" id="GO:0005759">
    <property type="term" value="C:mitochondrial matrix"/>
    <property type="evidence" value="ECO:0007669"/>
    <property type="project" value="UniProtKB-SubCell"/>
</dbReference>
<dbReference type="GO" id="GO:0005739">
    <property type="term" value="C:mitochondrion"/>
    <property type="evidence" value="ECO:0000266"/>
    <property type="project" value="RGD"/>
</dbReference>
<dbReference type="GO" id="GO:0016597">
    <property type="term" value="F:amino acid binding"/>
    <property type="evidence" value="ECO:0000315"/>
    <property type="project" value="RGD"/>
</dbReference>
<dbReference type="GO" id="GO:0042802">
    <property type="term" value="F:identical protein binding"/>
    <property type="evidence" value="ECO:0000353"/>
    <property type="project" value="RGD"/>
</dbReference>
<dbReference type="GO" id="GO:0004585">
    <property type="term" value="F:ornithine carbamoyltransferase activity"/>
    <property type="evidence" value="ECO:0000314"/>
    <property type="project" value="RGD"/>
</dbReference>
<dbReference type="GO" id="GO:0042301">
    <property type="term" value="F:phosphate ion binding"/>
    <property type="evidence" value="ECO:0000315"/>
    <property type="project" value="RGD"/>
</dbReference>
<dbReference type="GO" id="GO:0005543">
    <property type="term" value="F:phospholipid binding"/>
    <property type="evidence" value="ECO:0000314"/>
    <property type="project" value="RGD"/>
</dbReference>
<dbReference type="GO" id="GO:0097272">
    <property type="term" value="P:ammonium homeostasis"/>
    <property type="evidence" value="ECO:0000266"/>
    <property type="project" value="RGD"/>
</dbReference>
<dbReference type="GO" id="GO:0042450">
    <property type="term" value="P:arginine biosynthetic process via ornithine"/>
    <property type="evidence" value="ECO:0000318"/>
    <property type="project" value="GO_Central"/>
</dbReference>
<dbReference type="GO" id="GO:0019240">
    <property type="term" value="P:citrulline biosynthetic process"/>
    <property type="evidence" value="ECO:0000314"/>
    <property type="project" value="RGD"/>
</dbReference>
<dbReference type="GO" id="GO:0006526">
    <property type="term" value="P:L-arginine biosynthetic process"/>
    <property type="evidence" value="ECO:0007669"/>
    <property type="project" value="UniProtKB-KW"/>
</dbReference>
<dbReference type="GO" id="GO:0001889">
    <property type="term" value="P:liver development"/>
    <property type="evidence" value="ECO:0000270"/>
    <property type="project" value="RGD"/>
</dbReference>
<dbReference type="GO" id="GO:0007494">
    <property type="term" value="P:midgut development"/>
    <property type="evidence" value="ECO:0000270"/>
    <property type="project" value="RGD"/>
</dbReference>
<dbReference type="GO" id="GO:0055081">
    <property type="term" value="P:monoatomic anion homeostasis"/>
    <property type="evidence" value="ECO:0000314"/>
    <property type="project" value="RGD"/>
</dbReference>
<dbReference type="GO" id="GO:0006593">
    <property type="term" value="P:ornithine catabolic process"/>
    <property type="evidence" value="ECO:0000266"/>
    <property type="project" value="RGD"/>
</dbReference>
<dbReference type="GO" id="GO:0006591">
    <property type="term" value="P:ornithine metabolic process"/>
    <property type="evidence" value="ECO:0000314"/>
    <property type="project" value="RGD"/>
</dbReference>
<dbReference type="GO" id="GO:0070781">
    <property type="term" value="P:response to biotin"/>
    <property type="evidence" value="ECO:0000270"/>
    <property type="project" value="RGD"/>
</dbReference>
<dbReference type="GO" id="GO:0032868">
    <property type="term" value="P:response to insulin"/>
    <property type="evidence" value="ECO:0000270"/>
    <property type="project" value="RGD"/>
</dbReference>
<dbReference type="GO" id="GO:0031667">
    <property type="term" value="P:response to nutrient levels"/>
    <property type="evidence" value="ECO:0000270"/>
    <property type="project" value="RGD"/>
</dbReference>
<dbReference type="GO" id="GO:0009410">
    <property type="term" value="P:response to xenobiotic stimulus"/>
    <property type="evidence" value="ECO:0000270"/>
    <property type="project" value="RGD"/>
</dbReference>
<dbReference type="GO" id="GO:0010043">
    <property type="term" value="P:response to zinc ion"/>
    <property type="evidence" value="ECO:0000270"/>
    <property type="project" value="RGD"/>
</dbReference>
<dbReference type="GO" id="GO:0000050">
    <property type="term" value="P:urea cycle"/>
    <property type="evidence" value="ECO:0000314"/>
    <property type="project" value="RGD"/>
</dbReference>
<dbReference type="FunFam" id="3.40.50.1370:FF:000009">
    <property type="entry name" value="Ornithine carbamoyltransferase, mitochondrial"/>
    <property type="match status" value="1"/>
</dbReference>
<dbReference type="FunFam" id="3.40.50.1370:FF:000010">
    <property type="entry name" value="Ornithine carbamoyltransferase, mitochondrial"/>
    <property type="match status" value="1"/>
</dbReference>
<dbReference type="Gene3D" id="3.40.50.1370">
    <property type="entry name" value="Aspartate/ornithine carbamoyltransferase"/>
    <property type="match status" value="2"/>
</dbReference>
<dbReference type="InterPro" id="IPR006132">
    <property type="entry name" value="Asp/Orn_carbamoyltranf_P-bd"/>
</dbReference>
<dbReference type="InterPro" id="IPR006130">
    <property type="entry name" value="Asp/Orn_carbamoylTrfase"/>
</dbReference>
<dbReference type="InterPro" id="IPR036901">
    <property type="entry name" value="Asp/Orn_carbamoylTrfase_sf"/>
</dbReference>
<dbReference type="InterPro" id="IPR006131">
    <property type="entry name" value="Asp_carbamoyltransf_Asp/Orn-bd"/>
</dbReference>
<dbReference type="InterPro" id="IPR002292">
    <property type="entry name" value="Orn/put_carbamltrans"/>
</dbReference>
<dbReference type="NCBIfam" id="TIGR00658">
    <property type="entry name" value="orni_carb_tr"/>
    <property type="match status" value="1"/>
</dbReference>
<dbReference type="NCBIfam" id="NF001986">
    <property type="entry name" value="PRK00779.1"/>
    <property type="match status" value="1"/>
</dbReference>
<dbReference type="PANTHER" id="PTHR45753">
    <property type="entry name" value="ORNITHINE CARBAMOYLTRANSFERASE, MITOCHONDRIAL"/>
    <property type="match status" value="1"/>
</dbReference>
<dbReference type="PANTHER" id="PTHR45753:SF3">
    <property type="entry name" value="ORNITHINE TRANSCARBAMYLASE, MITOCHONDRIAL"/>
    <property type="match status" value="1"/>
</dbReference>
<dbReference type="Pfam" id="PF00185">
    <property type="entry name" value="OTCace"/>
    <property type="match status" value="1"/>
</dbReference>
<dbReference type="Pfam" id="PF02729">
    <property type="entry name" value="OTCace_N"/>
    <property type="match status" value="1"/>
</dbReference>
<dbReference type="PRINTS" id="PR00100">
    <property type="entry name" value="AOTCASE"/>
</dbReference>
<dbReference type="PRINTS" id="PR00102">
    <property type="entry name" value="OTCASE"/>
</dbReference>
<dbReference type="SUPFAM" id="SSF53671">
    <property type="entry name" value="Aspartate/ornithine carbamoyltransferase"/>
    <property type="match status" value="1"/>
</dbReference>
<dbReference type="PROSITE" id="PS00097">
    <property type="entry name" value="CARBAMOYLTRANSFERASE"/>
    <property type="match status" value="1"/>
</dbReference>